<keyword id="KW-0007">Acetylation</keyword>
<keyword id="KW-0025">Alternative splicing</keyword>
<keyword id="KW-0488">Methylation</keyword>
<keyword id="KW-0597">Phosphoprotein</keyword>
<keyword id="KW-1267">Proteomics identification</keyword>
<keyword id="KW-1185">Reference proteome</keyword>
<evidence type="ECO:0000256" key="1">
    <source>
        <dbReference type="SAM" id="MobiDB-lite"/>
    </source>
</evidence>
<evidence type="ECO:0000303" key="2">
    <source>
    </source>
</evidence>
<evidence type="ECO:0000305" key="3"/>
<evidence type="ECO:0007744" key="4">
    <source>
    </source>
</evidence>
<evidence type="ECO:0007744" key="5">
    <source>
    </source>
</evidence>
<evidence type="ECO:0007744" key="6">
    <source>
    </source>
</evidence>
<comment type="interaction">
    <interactant intactId="EBI-715389">
        <id>Q9H7E9</id>
    </interactant>
    <interactant intactId="EBI-739624">
        <id>Q8NHQ1</id>
        <label>CEP70</label>
    </interactant>
    <organismsDiffer>false</organismsDiffer>
    <experiments>5</experiments>
</comment>
<comment type="interaction">
    <interactant intactId="EBI-715389">
        <id>Q9H7E9</id>
    </interactant>
    <interactant intactId="EBI-349854">
        <id>P13569</id>
        <label>CFTR</label>
    </interactant>
    <organismsDiffer>false</organismsDiffer>
    <experiments>5</experiments>
</comment>
<comment type="interaction">
    <interactant intactId="EBI-715389">
        <id>Q9H7E9</id>
    </interactant>
    <interactant intactId="EBI-11988027">
        <id>Q9NRI5-2</id>
        <label>DISC1</label>
    </interactant>
    <organismsDiffer>false</organismsDiffer>
    <experiments>3</experiments>
</comment>
<comment type="interaction">
    <interactant intactId="EBI-715389">
        <id>Q9H7E9</id>
    </interactant>
    <interactant intactId="EBI-10175124">
        <id>Q8IZU0</id>
        <label>FAM9B</label>
    </interactant>
    <organismsDiffer>false</organismsDiffer>
    <experiments>3</experiments>
</comment>
<comment type="interaction">
    <interactant intactId="EBI-715389">
        <id>Q9H7E9</id>
    </interactant>
    <interactant intactId="EBI-2549423">
        <id>Q6NT76</id>
        <label>HMBOX1</label>
    </interactant>
    <organismsDiffer>false</organismsDiffer>
    <experiments>6</experiments>
</comment>
<comment type="interaction">
    <interactant intactId="EBI-715389">
        <id>Q9H7E9</id>
    </interactant>
    <interactant intactId="EBI-745305">
        <id>Q13422</id>
        <label>IKZF1</label>
    </interactant>
    <organismsDiffer>false</organismsDiffer>
    <experiments>3</experiments>
</comment>
<comment type="interaction">
    <interactant intactId="EBI-715389">
        <id>Q9H7E9</id>
    </interactant>
    <interactant intactId="EBI-11522367">
        <id>Q13422-7</id>
        <label>IKZF1</label>
    </interactant>
    <organismsDiffer>false</organismsDiffer>
    <experiments>3</experiments>
</comment>
<comment type="interaction">
    <interactant intactId="EBI-715389">
        <id>Q9H7E9</id>
    </interactant>
    <interactant intactId="EBI-2511344">
        <id>Q8NC69</id>
        <label>KCTD6</label>
    </interactant>
    <organismsDiffer>false</organismsDiffer>
    <experiments>3</experiments>
</comment>
<comment type="interaction">
    <interactant intactId="EBI-715389">
        <id>Q9H7E9</id>
    </interactant>
    <interactant intactId="EBI-10172290">
        <id>P60409</id>
        <label>KRTAP10-7</label>
    </interactant>
    <organismsDiffer>false</organismsDiffer>
    <experiments>3</experiments>
</comment>
<comment type="interaction">
    <interactant intactId="EBI-715389">
        <id>Q9H7E9</id>
    </interactant>
    <interactant intactId="EBI-741037">
        <id>Q9BRK4</id>
        <label>LZTS2</label>
    </interactant>
    <organismsDiffer>false</organismsDiffer>
    <experiments>3</experiments>
</comment>
<comment type="interaction">
    <interactant intactId="EBI-715389">
        <id>Q9H7E9</id>
    </interactant>
    <interactant intactId="EBI-307531">
        <id>P23508</id>
        <label>MCC</label>
    </interactant>
    <organismsDiffer>false</organismsDiffer>
    <experiments>3</experiments>
</comment>
<comment type="interaction">
    <interactant intactId="EBI-715389">
        <id>Q9H7E9</id>
    </interactant>
    <interactant intactId="EBI-724076">
        <id>Q99750</id>
        <label>MDFI</label>
    </interactant>
    <organismsDiffer>false</organismsDiffer>
    <experiments>5</experiments>
</comment>
<comment type="interaction">
    <interactant intactId="EBI-715389">
        <id>Q9H7E9</id>
    </interactant>
    <interactant intactId="EBI-7950997">
        <id>Q96RE7</id>
        <label>NACC1</label>
    </interactant>
    <organismsDiffer>false</organismsDiffer>
    <experiments>3</experiments>
</comment>
<comment type="interaction">
    <interactant intactId="EBI-715389">
        <id>Q9H7E9</id>
    </interactant>
    <interactant intactId="EBI-79165">
        <id>Q9NRD5</id>
        <label>PICK1</label>
    </interactant>
    <organismsDiffer>false</organismsDiffer>
    <experiments>3</experiments>
</comment>
<comment type="interaction">
    <interactant intactId="EBI-715389">
        <id>Q9H7E9</id>
    </interactant>
    <interactant intactId="EBI-302345">
        <id>Q8ND90</id>
        <label>PNMA1</label>
    </interactant>
    <organismsDiffer>false</organismsDiffer>
    <experiments>3</experiments>
</comment>
<comment type="interaction">
    <interactant intactId="EBI-715389">
        <id>Q9H7E9</id>
    </interactant>
    <interactant intactId="EBI-357849">
        <id>Q15025</id>
        <label>TNIP1</label>
    </interactant>
    <organismsDiffer>false</organismsDiffer>
    <experiments>3</experiments>
</comment>
<comment type="interaction">
    <interactant intactId="EBI-715389">
        <id>Q9H7E9</id>
    </interactant>
    <interactant intactId="EBI-740098">
        <id>P36406</id>
        <label>TRIM23</label>
    </interactant>
    <organismsDiffer>false</organismsDiffer>
    <experiments>3</experiments>
</comment>
<comment type="interaction">
    <interactant intactId="EBI-715389">
        <id>Q9H7E9</id>
    </interactant>
    <interactant intactId="EBI-725997">
        <id>Q8WV44</id>
        <label>TRIM41</label>
    </interactant>
    <organismsDiffer>false</organismsDiffer>
    <experiments>3</experiments>
</comment>
<comment type="interaction">
    <interactant intactId="EBI-715389">
        <id>Q9H7E9</id>
    </interactant>
    <interactant intactId="EBI-11035148">
        <id>Q8TF50</id>
        <label>ZNF526</label>
    </interactant>
    <organismsDiffer>false</organismsDiffer>
    <experiments>3</experiments>
</comment>
<comment type="alternative products">
    <event type="alternative splicing"/>
    <isoform>
        <id>Q9H7E9-1</id>
        <name>1</name>
        <sequence type="displayed"/>
    </isoform>
    <isoform>
        <id>Q9H7E9-2</id>
        <name>2</name>
        <sequence type="described" ref="VSP_028169"/>
    </isoform>
</comment>
<comment type="similarity">
    <text evidence="3">Belongs to the UPF0488 family.</text>
</comment>
<sequence length="229" mass="24993">MAALGHLAGEAAAAPGPGTPCASRGARLPGPVSSARNPSTVCLCPEQPTCSNADSRAHPLGDEGGTASKKQKNKKKTRNRASVANGGEKASEKLAPEEVPLSAEAQAQQLAQELAWCVEQLELGLKRQKPTPKQKEQAIGAIRTLRSKRTPLPRKRQLMHSLFGDYRAQMEAEWREALRALRAAAYSAQVQPVDGATRKKSQRVCRPRSIWRAKATLDMPDEEFRFNFF</sequence>
<feature type="initiator methionine" description="Removed" evidence="4">
    <location>
        <position position="1"/>
    </location>
</feature>
<feature type="chain" id="PRO_0000304982" description="UPF0488 protein C8orf33">
    <location>
        <begin position="2"/>
        <end position="229"/>
    </location>
</feature>
<feature type="region of interest" description="Disordered" evidence="1">
    <location>
        <begin position="1"/>
        <end position="96"/>
    </location>
</feature>
<feature type="compositionally biased region" description="Low complexity" evidence="1">
    <location>
        <begin position="1"/>
        <end position="16"/>
    </location>
</feature>
<feature type="compositionally biased region" description="Basic residues" evidence="1">
    <location>
        <begin position="69"/>
        <end position="79"/>
    </location>
</feature>
<feature type="modified residue" description="N-acetylalanine" evidence="4">
    <location>
        <position position="2"/>
    </location>
</feature>
<feature type="modified residue" description="Omega-N-methylarginine" evidence="6">
    <location>
        <position position="27"/>
    </location>
</feature>
<feature type="modified residue" description="Phosphoserine" evidence="5">
    <location>
        <position position="82"/>
    </location>
</feature>
<feature type="splice variant" id="VSP_028169" description="In isoform 2." evidence="2">
    <original>Q</original>
    <variation>QARAGFGREGWNPR</variation>
    <location>
        <position position="106"/>
    </location>
</feature>
<organism>
    <name type="scientific">Homo sapiens</name>
    <name type="common">Human</name>
    <dbReference type="NCBI Taxonomy" id="9606"/>
    <lineage>
        <taxon>Eukaryota</taxon>
        <taxon>Metazoa</taxon>
        <taxon>Chordata</taxon>
        <taxon>Craniata</taxon>
        <taxon>Vertebrata</taxon>
        <taxon>Euteleostomi</taxon>
        <taxon>Mammalia</taxon>
        <taxon>Eutheria</taxon>
        <taxon>Euarchontoglires</taxon>
        <taxon>Primates</taxon>
        <taxon>Haplorrhini</taxon>
        <taxon>Catarrhini</taxon>
        <taxon>Hominidae</taxon>
        <taxon>Homo</taxon>
    </lineage>
</organism>
<dbReference type="EMBL" id="AK024642">
    <property type="protein sequence ID" value="BAB14943.1"/>
    <property type="molecule type" value="mRNA"/>
</dbReference>
<dbReference type="EMBL" id="CR457330">
    <property type="protein sequence ID" value="CAG33611.1"/>
    <property type="molecule type" value="mRNA"/>
</dbReference>
<dbReference type="EMBL" id="AC139103">
    <property type="status" value="NOT_ANNOTATED_CDS"/>
    <property type="molecule type" value="Genomic_DNA"/>
</dbReference>
<dbReference type="EMBL" id="CH471162">
    <property type="protein sequence ID" value="EAW82023.1"/>
    <property type="molecule type" value="Genomic_DNA"/>
</dbReference>
<dbReference type="EMBL" id="BC010001">
    <property type="protein sequence ID" value="AAH10001.1"/>
    <property type="molecule type" value="mRNA"/>
</dbReference>
<dbReference type="EMBL" id="BC015181">
    <property type="protein sequence ID" value="AAH15181.1"/>
    <property type="molecule type" value="mRNA"/>
</dbReference>
<dbReference type="CCDS" id="CCDS34974.1">
    <molecule id="Q9H7E9-1"/>
</dbReference>
<dbReference type="RefSeq" id="NP_075568.1">
    <molecule id="Q9H7E9-1"/>
    <property type="nucleotide sequence ID" value="NM_023080.3"/>
</dbReference>
<dbReference type="RefSeq" id="XP_054217000.1">
    <molecule id="Q9H7E9-1"/>
    <property type="nucleotide sequence ID" value="XM_054361025.1"/>
</dbReference>
<dbReference type="SMR" id="Q9H7E9"/>
<dbReference type="BioGRID" id="122420">
    <property type="interactions" value="203"/>
</dbReference>
<dbReference type="FunCoup" id="Q9H7E9">
    <property type="interactions" value="1440"/>
</dbReference>
<dbReference type="IntAct" id="Q9H7E9">
    <property type="interactions" value="131"/>
</dbReference>
<dbReference type="MINT" id="Q9H7E9"/>
<dbReference type="STRING" id="9606.ENSP00000330361"/>
<dbReference type="GlyCosmos" id="Q9H7E9">
    <property type="glycosylation" value="1 site, 1 glycan"/>
</dbReference>
<dbReference type="GlyGen" id="Q9H7E9">
    <property type="glycosylation" value="1 site, 1 O-linked glycan (1 site)"/>
</dbReference>
<dbReference type="iPTMnet" id="Q9H7E9"/>
<dbReference type="PhosphoSitePlus" id="Q9H7E9"/>
<dbReference type="BioMuta" id="C8orf33"/>
<dbReference type="DMDM" id="74733630"/>
<dbReference type="jPOST" id="Q9H7E9"/>
<dbReference type="MassIVE" id="Q9H7E9"/>
<dbReference type="PaxDb" id="9606-ENSP00000330361"/>
<dbReference type="PeptideAtlas" id="Q9H7E9"/>
<dbReference type="ProteomicsDB" id="81116">
    <molecule id="Q9H7E9-1"/>
</dbReference>
<dbReference type="ProteomicsDB" id="81117">
    <molecule id="Q9H7E9-2"/>
</dbReference>
<dbReference type="Pumba" id="Q9H7E9"/>
<dbReference type="Antibodypedia" id="28690">
    <property type="antibodies" value="81 antibodies from 12 providers"/>
</dbReference>
<dbReference type="DNASU" id="65265"/>
<dbReference type="Ensembl" id="ENST00000331434.7">
    <molecule id="Q9H7E9-1"/>
    <property type="protein sequence ID" value="ENSP00000330361.6"/>
    <property type="gene ID" value="ENSG00000182307.14"/>
</dbReference>
<dbReference type="Ensembl" id="ENST00000707298.1">
    <molecule id="Q9H7E9-1"/>
    <property type="protein sequence ID" value="ENSP00000516830.1"/>
    <property type="gene ID" value="ENSG00000291362.1"/>
</dbReference>
<dbReference type="GeneID" id="65265"/>
<dbReference type="KEGG" id="hsa:65265"/>
<dbReference type="MANE-Select" id="ENST00000331434.7">
    <property type="protein sequence ID" value="ENSP00000330361.6"/>
    <property type="RefSeq nucleotide sequence ID" value="NM_023080.3"/>
    <property type="RefSeq protein sequence ID" value="NP_075568.1"/>
</dbReference>
<dbReference type="UCSC" id="uc003zfc.5">
    <molecule id="Q9H7E9-1"/>
    <property type="organism name" value="human"/>
</dbReference>
<dbReference type="AGR" id="HGNC:26104"/>
<dbReference type="CTD" id="65265"/>
<dbReference type="GeneCards" id="C8orf33"/>
<dbReference type="HGNC" id="HGNC:26104">
    <property type="gene designation" value="C8orf33"/>
</dbReference>
<dbReference type="HPA" id="ENSG00000182307">
    <property type="expression patterns" value="Low tissue specificity"/>
</dbReference>
<dbReference type="neXtProt" id="NX_Q9H7E9"/>
<dbReference type="OpenTargets" id="ENSG00000182307"/>
<dbReference type="PharmGKB" id="PA142672352"/>
<dbReference type="VEuPathDB" id="HostDB:ENSG00000182307"/>
<dbReference type="eggNOG" id="ENOG502S1RU">
    <property type="taxonomic scope" value="Eukaryota"/>
</dbReference>
<dbReference type="GeneTree" id="ENSGT00390000000306"/>
<dbReference type="HOGENOM" id="CLU_082144_1_1_1"/>
<dbReference type="InParanoid" id="Q9H7E9"/>
<dbReference type="OMA" id="CLCAGQP"/>
<dbReference type="OrthoDB" id="20277at2759"/>
<dbReference type="PAN-GO" id="Q9H7E9">
    <property type="GO annotations" value="0 GO annotations based on evolutionary models"/>
</dbReference>
<dbReference type="PhylomeDB" id="Q9H7E9"/>
<dbReference type="TreeFam" id="TF326272"/>
<dbReference type="PathwayCommons" id="Q9H7E9"/>
<dbReference type="SignaLink" id="Q9H7E9"/>
<dbReference type="BioGRID-ORCS" id="65265">
    <property type="hits" value="103 hits in 1146 CRISPR screens"/>
</dbReference>
<dbReference type="ChiTaRS" id="C8orf33">
    <property type="organism name" value="human"/>
</dbReference>
<dbReference type="GenomeRNAi" id="65265"/>
<dbReference type="Pharos" id="Q9H7E9">
    <property type="development level" value="Tdark"/>
</dbReference>
<dbReference type="PRO" id="PR:Q9H7E9"/>
<dbReference type="Proteomes" id="UP000005640">
    <property type="component" value="Chromosome 8"/>
</dbReference>
<dbReference type="RNAct" id="Q9H7E9">
    <property type="molecule type" value="protein"/>
</dbReference>
<dbReference type="Bgee" id="ENSG00000182307">
    <property type="expression patterns" value="Expressed in right adrenal gland cortex and 196 other cell types or tissues"/>
</dbReference>
<dbReference type="ExpressionAtlas" id="Q9H7E9">
    <property type="expression patterns" value="baseline and differential"/>
</dbReference>
<dbReference type="InterPro" id="IPR029274">
    <property type="entry name" value="DUF4615"/>
</dbReference>
<dbReference type="PANTHER" id="PTHR13602">
    <property type="entry name" value="UPF0488 PROTEIN C8ORF33"/>
    <property type="match status" value="1"/>
</dbReference>
<dbReference type="PANTHER" id="PTHR13602:SF2">
    <property type="entry name" value="UPF0488 PROTEIN C8ORF33"/>
    <property type="match status" value="1"/>
</dbReference>
<dbReference type="Pfam" id="PF15393">
    <property type="entry name" value="DUF4615"/>
    <property type="match status" value="1"/>
</dbReference>
<protein>
    <recommendedName>
        <fullName>UPF0488 protein C8orf33</fullName>
    </recommendedName>
</protein>
<gene>
    <name type="primary">C8orf33</name>
</gene>
<accession>Q9H7E9</accession>
<accession>A6NGC0</accession>
<accession>Q96BT8</accession>
<reference key="1">
    <citation type="journal article" date="2004" name="Nat. Genet.">
        <title>Complete sequencing and characterization of 21,243 full-length human cDNAs.</title>
        <authorList>
            <person name="Ota T."/>
            <person name="Suzuki Y."/>
            <person name="Nishikawa T."/>
            <person name="Otsuki T."/>
            <person name="Sugiyama T."/>
            <person name="Irie R."/>
            <person name="Wakamatsu A."/>
            <person name="Hayashi K."/>
            <person name="Sato H."/>
            <person name="Nagai K."/>
            <person name="Kimura K."/>
            <person name="Makita H."/>
            <person name="Sekine M."/>
            <person name="Obayashi M."/>
            <person name="Nishi T."/>
            <person name="Shibahara T."/>
            <person name="Tanaka T."/>
            <person name="Ishii S."/>
            <person name="Yamamoto J."/>
            <person name="Saito K."/>
            <person name="Kawai Y."/>
            <person name="Isono Y."/>
            <person name="Nakamura Y."/>
            <person name="Nagahari K."/>
            <person name="Murakami K."/>
            <person name="Yasuda T."/>
            <person name="Iwayanagi T."/>
            <person name="Wagatsuma M."/>
            <person name="Shiratori A."/>
            <person name="Sudo H."/>
            <person name="Hosoiri T."/>
            <person name="Kaku Y."/>
            <person name="Kodaira H."/>
            <person name="Kondo H."/>
            <person name="Sugawara M."/>
            <person name="Takahashi M."/>
            <person name="Kanda K."/>
            <person name="Yokoi T."/>
            <person name="Furuya T."/>
            <person name="Kikkawa E."/>
            <person name="Omura Y."/>
            <person name="Abe K."/>
            <person name="Kamihara K."/>
            <person name="Katsuta N."/>
            <person name="Sato K."/>
            <person name="Tanikawa M."/>
            <person name="Yamazaki M."/>
            <person name="Ninomiya K."/>
            <person name="Ishibashi T."/>
            <person name="Yamashita H."/>
            <person name="Murakawa K."/>
            <person name="Fujimori K."/>
            <person name="Tanai H."/>
            <person name="Kimata M."/>
            <person name="Watanabe M."/>
            <person name="Hiraoka S."/>
            <person name="Chiba Y."/>
            <person name="Ishida S."/>
            <person name="Ono Y."/>
            <person name="Takiguchi S."/>
            <person name="Watanabe S."/>
            <person name="Yosida M."/>
            <person name="Hotuta T."/>
            <person name="Kusano J."/>
            <person name="Kanehori K."/>
            <person name="Takahashi-Fujii A."/>
            <person name="Hara H."/>
            <person name="Tanase T.-O."/>
            <person name="Nomura Y."/>
            <person name="Togiya S."/>
            <person name="Komai F."/>
            <person name="Hara R."/>
            <person name="Takeuchi K."/>
            <person name="Arita M."/>
            <person name="Imose N."/>
            <person name="Musashino K."/>
            <person name="Yuuki H."/>
            <person name="Oshima A."/>
            <person name="Sasaki N."/>
            <person name="Aotsuka S."/>
            <person name="Yoshikawa Y."/>
            <person name="Matsunawa H."/>
            <person name="Ichihara T."/>
            <person name="Shiohata N."/>
            <person name="Sano S."/>
            <person name="Moriya S."/>
            <person name="Momiyama H."/>
            <person name="Satoh N."/>
            <person name="Takami S."/>
            <person name="Terashima Y."/>
            <person name="Suzuki O."/>
            <person name="Nakagawa S."/>
            <person name="Senoh A."/>
            <person name="Mizoguchi H."/>
            <person name="Goto Y."/>
            <person name="Shimizu F."/>
            <person name="Wakebe H."/>
            <person name="Hishigaki H."/>
            <person name="Watanabe T."/>
            <person name="Sugiyama A."/>
            <person name="Takemoto M."/>
            <person name="Kawakami B."/>
            <person name="Yamazaki M."/>
            <person name="Watanabe K."/>
            <person name="Kumagai A."/>
            <person name="Itakura S."/>
            <person name="Fukuzumi Y."/>
            <person name="Fujimori Y."/>
            <person name="Komiyama M."/>
            <person name="Tashiro H."/>
            <person name="Tanigami A."/>
            <person name="Fujiwara T."/>
            <person name="Ono T."/>
            <person name="Yamada K."/>
            <person name="Fujii Y."/>
            <person name="Ozaki K."/>
            <person name="Hirao M."/>
            <person name="Ohmori Y."/>
            <person name="Kawabata A."/>
            <person name="Hikiji T."/>
            <person name="Kobatake N."/>
            <person name="Inagaki H."/>
            <person name="Ikema Y."/>
            <person name="Okamoto S."/>
            <person name="Okitani R."/>
            <person name="Kawakami T."/>
            <person name="Noguchi S."/>
            <person name="Itoh T."/>
            <person name="Shigeta K."/>
            <person name="Senba T."/>
            <person name="Matsumura K."/>
            <person name="Nakajima Y."/>
            <person name="Mizuno T."/>
            <person name="Morinaga M."/>
            <person name="Sasaki M."/>
            <person name="Togashi T."/>
            <person name="Oyama M."/>
            <person name="Hata H."/>
            <person name="Watanabe M."/>
            <person name="Komatsu T."/>
            <person name="Mizushima-Sugano J."/>
            <person name="Satoh T."/>
            <person name="Shirai Y."/>
            <person name="Takahashi Y."/>
            <person name="Nakagawa K."/>
            <person name="Okumura K."/>
            <person name="Nagase T."/>
            <person name="Nomura N."/>
            <person name="Kikuchi H."/>
            <person name="Masuho Y."/>
            <person name="Yamashita R."/>
            <person name="Nakai K."/>
            <person name="Yada T."/>
            <person name="Nakamura Y."/>
            <person name="Ohara O."/>
            <person name="Isogai T."/>
            <person name="Sugano S."/>
        </authorList>
    </citation>
    <scope>NUCLEOTIDE SEQUENCE [LARGE SCALE MRNA] (ISOFORM 1)</scope>
    <source>
        <tissue>Endothelial cell</tissue>
    </source>
</reference>
<reference key="2">
    <citation type="submission" date="2004-06" db="EMBL/GenBank/DDBJ databases">
        <title>Cloning of human full open reading frames in Gateway(TM) system entry vector (pDONR201).</title>
        <authorList>
            <person name="Ebert L."/>
            <person name="Schick M."/>
            <person name="Neubert P."/>
            <person name="Schatten R."/>
            <person name="Henze S."/>
            <person name="Korn B."/>
        </authorList>
    </citation>
    <scope>NUCLEOTIDE SEQUENCE [LARGE SCALE MRNA] (ISOFORM 1)</scope>
</reference>
<reference key="3">
    <citation type="journal article" date="2006" name="Nature">
        <title>DNA sequence and analysis of human chromosome 8.</title>
        <authorList>
            <person name="Nusbaum C."/>
            <person name="Mikkelsen T.S."/>
            <person name="Zody M.C."/>
            <person name="Asakawa S."/>
            <person name="Taudien S."/>
            <person name="Garber M."/>
            <person name="Kodira C.D."/>
            <person name="Schueler M.G."/>
            <person name="Shimizu A."/>
            <person name="Whittaker C.A."/>
            <person name="Chang J.L."/>
            <person name="Cuomo C.A."/>
            <person name="Dewar K."/>
            <person name="FitzGerald M.G."/>
            <person name="Yang X."/>
            <person name="Allen N.R."/>
            <person name="Anderson S."/>
            <person name="Asakawa T."/>
            <person name="Blechschmidt K."/>
            <person name="Bloom T."/>
            <person name="Borowsky M.L."/>
            <person name="Butler J."/>
            <person name="Cook A."/>
            <person name="Corum B."/>
            <person name="DeArellano K."/>
            <person name="DeCaprio D."/>
            <person name="Dooley K.T."/>
            <person name="Dorris L. III"/>
            <person name="Engels R."/>
            <person name="Gloeckner G."/>
            <person name="Hafez N."/>
            <person name="Hagopian D.S."/>
            <person name="Hall J.L."/>
            <person name="Ishikawa S.K."/>
            <person name="Jaffe D.B."/>
            <person name="Kamat A."/>
            <person name="Kudoh J."/>
            <person name="Lehmann R."/>
            <person name="Lokitsang T."/>
            <person name="Macdonald P."/>
            <person name="Major J.E."/>
            <person name="Matthews C.D."/>
            <person name="Mauceli E."/>
            <person name="Menzel U."/>
            <person name="Mihalev A.H."/>
            <person name="Minoshima S."/>
            <person name="Murayama Y."/>
            <person name="Naylor J.W."/>
            <person name="Nicol R."/>
            <person name="Nguyen C."/>
            <person name="O'Leary S.B."/>
            <person name="O'Neill K."/>
            <person name="Parker S.C.J."/>
            <person name="Polley A."/>
            <person name="Raymond C.K."/>
            <person name="Reichwald K."/>
            <person name="Rodriguez J."/>
            <person name="Sasaki T."/>
            <person name="Schilhabel M."/>
            <person name="Siddiqui R."/>
            <person name="Smith C.L."/>
            <person name="Sneddon T.P."/>
            <person name="Talamas J.A."/>
            <person name="Tenzin P."/>
            <person name="Topham K."/>
            <person name="Venkataraman V."/>
            <person name="Wen G."/>
            <person name="Yamazaki S."/>
            <person name="Young S.K."/>
            <person name="Zeng Q."/>
            <person name="Zimmer A.R."/>
            <person name="Rosenthal A."/>
            <person name="Birren B.W."/>
            <person name="Platzer M."/>
            <person name="Shimizu N."/>
            <person name="Lander E.S."/>
        </authorList>
    </citation>
    <scope>NUCLEOTIDE SEQUENCE [LARGE SCALE GENOMIC DNA]</scope>
</reference>
<reference key="4">
    <citation type="submission" date="2005-09" db="EMBL/GenBank/DDBJ databases">
        <authorList>
            <person name="Mural R.J."/>
            <person name="Istrail S."/>
            <person name="Sutton G.G."/>
            <person name="Florea L."/>
            <person name="Halpern A.L."/>
            <person name="Mobarry C.M."/>
            <person name="Lippert R."/>
            <person name="Walenz B."/>
            <person name="Shatkay H."/>
            <person name="Dew I."/>
            <person name="Miller J.R."/>
            <person name="Flanigan M.J."/>
            <person name="Edwards N.J."/>
            <person name="Bolanos R."/>
            <person name="Fasulo D."/>
            <person name="Halldorsson B.V."/>
            <person name="Hannenhalli S."/>
            <person name="Turner R."/>
            <person name="Yooseph S."/>
            <person name="Lu F."/>
            <person name="Nusskern D.R."/>
            <person name="Shue B.C."/>
            <person name="Zheng X.H."/>
            <person name="Zhong F."/>
            <person name="Delcher A.L."/>
            <person name="Huson D.H."/>
            <person name="Kravitz S.A."/>
            <person name="Mouchard L."/>
            <person name="Reinert K."/>
            <person name="Remington K.A."/>
            <person name="Clark A.G."/>
            <person name="Waterman M.S."/>
            <person name="Eichler E.E."/>
            <person name="Adams M.D."/>
            <person name="Hunkapiller M.W."/>
            <person name="Myers E.W."/>
            <person name="Venter J.C."/>
        </authorList>
    </citation>
    <scope>NUCLEOTIDE SEQUENCE [LARGE SCALE GENOMIC DNA]</scope>
</reference>
<reference key="5">
    <citation type="journal article" date="2004" name="Genome Res.">
        <title>The status, quality, and expansion of the NIH full-length cDNA project: the Mammalian Gene Collection (MGC).</title>
        <authorList>
            <consortium name="The MGC Project Team"/>
        </authorList>
    </citation>
    <scope>NUCLEOTIDE SEQUENCE [LARGE SCALE MRNA] (ISOFORM 1)</scope>
    <scope>NUCLEOTIDE SEQUENCE [LARGE SCALE MRNA] OF 76-229 (ISOFORM 2)</scope>
    <source>
        <tissue>Brain</tissue>
        <tissue>Uterus</tissue>
    </source>
</reference>
<reference key="6">
    <citation type="journal article" date="2009" name="Anal. Chem.">
        <title>Lys-N and trypsin cover complementary parts of the phosphoproteome in a refined SCX-based approach.</title>
        <authorList>
            <person name="Gauci S."/>
            <person name="Helbig A.O."/>
            <person name="Slijper M."/>
            <person name="Krijgsveld J."/>
            <person name="Heck A.J."/>
            <person name="Mohammed S."/>
        </authorList>
    </citation>
    <scope>ACETYLATION [LARGE SCALE ANALYSIS] AT ALA-2</scope>
    <scope>CLEAVAGE OF INITIATOR METHIONINE [LARGE SCALE ANALYSIS]</scope>
    <scope>IDENTIFICATION BY MASS SPECTROMETRY [LARGE SCALE ANALYSIS]</scope>
</reference>
<reference key="7">
    <citation type="journal article" date="2010" name="Sci. Signal.">
        <title>Quantitative phosphoproteomics reveals widespread full phosphorylation site occupancy during mitosis.</title>
        <authorList>
            <person name="Olsen J.V."/>
            <person name="Vermeulen M."/>
            <person name="Santamaria A."/>
            <person name="Kumar C."/>
            <person name="Miller M.L."/>
            <person name="Jensen L.J."/>
            <person name="Gnad F."/>
            <person name="Cox J."/>
            <person name="Jensen T.S."/>
            <person name="Nigg E.A."/>
            <person name="Brunak S."/>
            <person name="Mann M."/>
        </authorList>
    </citation>
    <scope>PHOSPHORYLATION [LARGE SCALE ANALYSIS] AT SER-82</scope>
    <scope>IDENTIFICATION BY MASS SPECTROMETRY [LARGE SCALE ANALYSIS]</scope>
    <source>
        <tissue>Cervix carcinoma</tissue>
    </source>
</reference>
<reference key="8">
    <citation type="journal article" date="2011" name="BMC Syst. Biol.">
        <title>Initial characterization of the human central proteome.</title>
        <authorList>
            <person name="Burkard T.R."/>
            <person name="Planyavsky M."/>
            <person name="Kaupe I."/>
            <person name="Breitwieser F.P."/>
            <person name="Buerckstuemmer T."/>
            <person name="Bennett K.L."/>
            <person name="Superti-Furga G."/>
            <person name="Colinge J."/>
        </authorList>
    </citation>
    <scope>IDENTIFICATION BY MASS SPECTROMETRY [LARGE SCALE ANALYSIS]</scope>
</reference>
<reference key="9">
    <citation type="journal article" date="2014" name="Mol. Cell. Proteomics">
        <title>Immunoaffinity enrichment and mass spectrometry analysis of protein methylation.</title>
        <authorList>
            <person name="Guo A."/>
            <person name="Gu H."/>
            <person name="Zhou J."/>
            <person name="Mulhern D."/>
            <person name="Wang Y."/>
            <person name="Lee K.A."/>
            <person name="Yang V."/>
            <person name="Aguiar M."/>
            <person name="Kornhauser J."/>
            <person name="Jia X."/>
            <person name="Ren J."/>
            <person name="Beausoleil S.A."/>
            <person name="Silva J.C."/>
            <person name="Vemulapalli V."/>
            <person name="Bedford M.T."/>
            <person name="Comb M.J."/>
        </authorList>
    </citation>
    <scope>METHYLATION [LARGE SCALE ANALYSIS] AT ARG-27</scope>
    <scope>IDENTIFICATION BY MASS SPECTROMETRY [LARGE SCALE ANALYSIS]</scope>
    <source>
        <tissue>Colon carcinoma</tissue>
    </source>
</reference>
<reference key="10">
    <citation type="journal article" date="2015" name="Proteomics">
        <title>N-terminome analysis of the human mitochondrial proteome.</title>
        <authorList>
            <person name="Vaca Jacome A.S."/>
            <person name="Rabilloud T."/>
            <person name="Schaeffer-Reiss C."/>
            <person name="Rompais M."/>
            <person name="Ayoub D."/>
            <person name="Lane L."/>
            <person name="Bairoch A."/>
            <person name="Van Dorsselaer A."/>
            <person name="Carapito C."/>
        </authorList>
    </citation>
    <scope>IDENTIFICATION BY MASS SPECTROMETRY [LARGE SCALE ANALYSIS]</scope>
</reference>
<name>CH033_HUMAN</name>
<proteinExistence type="evidence at protein level"/>